<accession>B0UVY2</accession>
<protein>
    <recommendedName>
        <fullName evidence="1">Probable transcriptional regulatory protein HSM_1763</fullName>
    </recommendedName>
</protein>
<evidence type="ECO:0000255" key="1">
    <source>
        <dbReference type="HAMAP-Rule" id="MF_00693"/>
    </source>
</evidence>
<reference key="1">
    <citation type="submission" date="2008-02" db="EMBL/GenBank/DDBJ databases">
        <title>Complete sequence of Haemophilus somnus 2336.</title>
        <authorList>
            <consortium name="US DOE Joint Genome Institute"/>
            <person name="Siddaramappa S."/>
            <person name="Duncan A.J."/>
            <person name="Challacombe J.F."/>
            <person name="Rainey D."/>
            <person name="Gillaspy A.F."/>
            <person name="Carson M."/>
            <person name="Gipson J."/>
            <person name="Gipson M."/>
            <person name="Bruce D."/>
            <person name="Detter J.C."/>
            <person name="Han C.S."/>
            <person name="Land M."/>
            <person name="Tapia R."/>
            <person name="Thompson L.S."/>
            <person name="Orvis J."/>
            <person name="Zaitshik J."/>
            <person name="Barnes G."/>
            <person name="Brettin T.S."/>
            <person name="Dyer D.W."/>
            <person name="Inzana T.J."/>
        </authorList>
    </citation>
    <scope>NUCLEOTIDE SEQUENCE [LARGE SCALE GENOMIC DNA]</scope>
    <source>
        <strain>2336</strain>
    </source>
</reference>
<comment type="subcellular location">
    <subcellularLocation>
        <location evidence="1">Cytoplasm</location>
    </subcellularLocation>
</comment>
<comment type="similarity">
    <text evidence="1">Belongs to the TACO1 family.</text>
</comment>
<organism>
    <name type="scientific">Histophilus somni (strain 2336)</name>
    <name type="common">Haemophilus somnus</name>
    <dbReference type="NCBI Taxonomy" id="228400"/>
    <lineage>
        <taxon>Bacteria</taxon>
        <taxon>Pseudomonadati</taxon>
        <taxon>Pseudomonadota</taxon>
        <taxon>Gammaproteobacteria</taxon>
        <taxon>Pasteurellales</taxon>
        <taxon>Pasteurellaceae</taxon>
        <taxon>Histophilus</taxon>
    </lineage>
</organism>
<dbReference type="EMBL" id="CP000947">
    <property type="protein sequence ID" value="ACA31544.1"/>
    <property type="molecule type" value="Genomic_DNA"/>
</dbReference>
<dbReference type="RefSeq" id="WP_012340870.1">
    <property type="nucleotide sequence ID" value="NC_010519.1"/>
</dbReference>
<dbReference type="SMR" id="B0UVY2"/>
<dbReference type="STRING" id="228400.HSM_1763"/>
<dbReference type="GeneID" id="31488070"/>
<dbReference type="KEGG" id="hsm:HSM_1763"/>
<dbReference type="HOGENOM" id="CLU_062974_2_2_6"/>
<dbReference type="GO" id="GO:0005829">
    <property type="term" value="C:cytosol"/>
    <property type="evidence" value="ECO:0007669"/>
    <property type="project" value="TreeGrafter"/>
</dbReference>
<dbReference type="GO" id="GO:0003677">
    <property type="term" value="F:DNA binding"/>
    <property type="evidence" value="ECO:0007669"/>
    <property type="project" value="UniProtKB-UniRule"/>
</dbReference>
<dbReference type="GO" id="GO:0006355">
    <property type="term" value="P:regulation of DNA-templated transcription"/>
    <property type="evidence" value="ECO:0007669"/>
    <property type="project" value="UniProtKB-UniRule"/>
</dbReference>
<dbReference type="FunFam" id="1.10.10.200:FF:000001">
    <property type="entry name" value="Probable transcriptional regulatory protein YebC"/>
    <property type="match status" value="1"/>
</dbReference>
<dbReference type="FunFam" id="3.30.70.980:FF:000002">
    <property type="entry name" value="Probable transcriptional regulatory protein YebC"/>
    <property type="match status" value="1"/>
</dbReference>
<dbReference type="Gene3D" id="1.10.10.200">
    <property type="match status" value="1"/>
</dbReference>
<dbReference type="Gene3D" id="3.30.70.980">
    <property type="match status" value="2"/>
</dbReference>
<dbReference type="HAMAP" id="MF_00693">
    <property type="entry name" value="Transcrip_reg_TACO1"/>
    <property type="match status" value="1"/>
</dbReference>
<dbReference type="InterPro" id="IPR017856">
    <property type="entry name" value="Integrase-like_N"/>
</dbReference>
<dbReference type="InterPro" id="IPR048300">
    <property type="entry name" value="TACO1_YebC-like_2nd/3rd_dom"/>
</dbReference>
<dbReference type="InterPro" id="IPR049083">
    <property type="entry name" value="TACO1_YebC_N"/>
</dbReference>
<dbReference type="InterPro" id="IPR002876">
    <property type="entry name" value="Transcrip_reg_TACO1-like"/>
</dbReference>
<dbReference type="InterPro" id="IPR026564">
    <property type="entry name" value="Transcrip_reg_TACO1-like_dom3"/>
</dbReference>
<dbReference type="InterPro" id="IPR029072">
    <property type="entry name" value="YebC-like"/>
</dbReference>
<dbReference type="NCBIfam" id="NF001030">
    <property type="entry name" value="PRK00110.1"/>
    <property type="match status" value="1"/>
</dbReference>
<dbReference type="NCBIfam" id="NF009044">
    <property type="entry name" value="PRK12378.1"/>
    <property type="match status" value="1"/>
</dbReference>
<dbReference type="NCBIfam" id="TIGR01033">
    <property type="entry name" value="YebC/PmpR family DNA-binding transcriptional regulator"/>
    <property type="match status" value="1"/>
</dbReference>
<dbReference type="PANTHER" id="PTHR12532:SF6">
    <property type="entry name" value="TRANSCRIPTIONAL REGULATORY PROTEIN YEBC-RELATED"/>
    <property type="match status" value="1"/>
</dbReference>
<dbReference type="PANTHER" id="PTHR12532">
    <property type="entry name" value="TRANSLATIONAL ACTIVATOR OF CYTOCHROME C OXIDASE 1"/>
    <property type="match status" value="1"/>
</dbReference>
<dbReference type="Pfam" id="PF20772">
    <property type="entry name" value="TACO1_YebC_N"/>
    <property type="match status" value="1"/>
</dbReference>
<dbReference type="Pfam" id="PF01709">
    <property type="entry name" value="Transcrip_reg"/>
    <property type="match status" value="1"/>
</dbReference>
<dbReference type="SUPFAM" id="SSF75625">
    <property type="entry name" value="YebC-like"/>
    <property type="match status" value="1"/>
</dbReference>
<keyword id="KW-0963">Cytoplasm</keyword>
<keyword id="KW-0238">DNA-binding</keyword>
<keyword id="KW-0804">Transcription</keyword>
<keyword id="KW-0805">Transcription regulation</keyword>
<proteinExistence type="inferred from homology"/>
<sequence>MAGHSKWANIKHRKAAQDAQRGKIFTKLIRELVTAAKLGGGDVGANPRLRAAVDKALSNNMTRDTINRAIERGVGGGDGTNMETRIYEGYGPGGTAVMVECLSDNANRTISQVRPSFTKCGGNLGTEGSVGYLFSKKGLILVESADEDALTEAAIEAGADDIQVQEDGSVEIYTAWEDLGLVKDGIEVAGFKVVNAEVTMIPSTMVDLDAETAPKLLRLIDMLEDCDDVQNVYHNGEISDEVAALL</sequence>
<feature type="chain" id="PRO_1000132198" description="Probable transcriptional regulatory protein HSM_1763">
    <location>
        <begin position="1"/>
        <end position="246"/>
    </location>
</feature>
<gene>
    <name type="ordered locus">HSM_1763</name>
</gene>
<name>Y1763_HISS2</name>